<reference key="1">
    <citation type="journal article" date="2007" name="PLoS ONE">
        <title>Analysis of the neurotoxin complex genes in Clostridium botulinum A1-A4 and B1 strains: BoNT/A3, /Ba4 and /B1 clusters are located within plasmids.</title>
        <authorList>
            <person name="Smith T.J."/>
            <person name="Hill K.K."/>
            <person name="Foley B.T."/>
            <person name="Detter J.C."/>
            <person name="Munk A.C."/>
            <person name="Bruce D.C."/>
            <person name="Doggett N.A."/>
            <person name="Smith L.A."/>
            <person name="Marks J.D."/>
            <person name="Xie G."/>
            <person name="Brettin T.S."/>
        </authorList>
    </citation>
    <scope>NUCLEOTIDE SEQUENCE [LARGE SCALE GENOMIC DNA]</scope>
    <source>
        <strain>Okra / Type B1</strain>
    </source>
</reference>
<feature type="chain" id="PRO_1000130453" description="Global transcriptional regulator CodY">
    <location>
        <begin position="1"/>
        <end position="258"/>
    </location>
</feature>
<feature type="DNA-binding region" description="H-T-H motif" evidence="1">
    <location>
        <begin position="204"/>
        <end position="223"/>
    </location>
</feature>
<feature type="region of interest" description="GAF domain" evidence="1">
    <location>
        <begin position="1"/>
        <end position="156"/>
    </location>
</feature>
<keyword id="KW-0963">Cytoplasm</keyword>
<keyword id="KW-0238">DNA-binding</keyword>
<keyword id="KW-0678">Repressor</keyword>
<keyword id="KW-0804">Transcription</keyword>
<keyword id="KW-0805">Transcription regulation</keyword>
<gene>
    <name evidence="1" type="primary">codY</name>
    <name type="ordered locus">CLD_2204</name>
</gene>
<sequence>MSSLLDKTRMLNRILQKSGTEPVDFEDICDLLSDVLACNVYIISRKGKILGSKFYSGFECEEVREVVLKENRFPDFYNNKLLNVNETLSNSPNHDKCVFDNLKDCSINNKLSTIVPINGNRERLGTLLLARFDKEFTDEDLILAEYSATIIGLEILRSKQDQIEEEARKKAVVQLAIGTLSYSELEAVEHIFNELDGTEGLLVASKIADKVGITRSVIVNALRKFESAGVIESRSLGMKGTHIRILNDKLLEELKKIK</sequence>
<comment type="function">
    <text evidence="1">DNA-binding global transcriptional regulator which is involved in the adaptive response to starvation and acts by directly or indirectly controlling the expression of numerous genes in response to nutrient availability. During rapid exponential growth, CodY is highly active and represses genes whose products allow adaptation to nutrient depletion.</text>
</comment>
<comment type="subcellular location">
    <subcellularLocation>
        <location evidence="1">Cytoplasm</location>
    </subcellularLocation>
</comment>
<comment type="similarity">
    <text evidence="1">Belongs to the CodY family.</text>
</comment>
<evidence type="ECO:0000255" key="1">
    <source>
        <dbReference type="HAMAP-Rule" id="MF_00621"/>
    </source>
</evidence>
<protein>
    <recommendedName>
        <fullName evidence="1">Global transcriptional regulator CodY</fullName>
    </recommendedName>
</protein>
<proteinExistence type="inferred from homology"/>
<accession>B1II67</accession>
<organism>
    <name type="scientific">Clostridium botulinum (strain Okra / Type B1)</name>
    <dbReference type="NCBI Taxonomy" id="498213"/>
    <lineage>
        <taxon>Bacteria</taxon>
        <taxon>Bacillati</taxon>
        <taxon>Bacillota</taxon>
        <taxon>Clostridia</taxon>
        <taxon>Eubacteriales</taxon>
        <taxon>Clostridiaceae</taxon>
        <taxon>Clostridium</taxon>
    </lineage>
</organism>
<dbReference type="EMBL" id="CP000939">
    <property type="protein sequence ID" value="ACA44282.1"/>
    <property type="molecule type" value="Genomic_DNA"/>
</dbReference>
<dbReference type="RefSeq" id="WP_012100385.1">
    <property type="nucleotide sequence ID" value="NC_010516.1"/>
</dbReference>
<dbReference type="SMR" id="B1II67"/>
<dbReference type="KEGG" id="cbb:CLD_2204"/>
<dbReference type="HOGENOM" id="CLU_089581_0_0_9"/>
<dbReference type="Proteomes" id="UP000008541">
    <property type="component" value="Chromosome"/>
</dbReference>
<dbReference type="GO" id="GO:0005737">
    <property type="term" value="C:cytoplasm"/>
    <property type="evidence" value="ECO:0007669"/>
    <property type="project" value="UniProtKB-SubCell"/>
</dbReference>
<dbReference type="GO" id="GO:0003677">
    <property type="term" value="F:DNA binding"/>
    <property type="evidence" value="ECO:0007669"/>
    <property type="project" value="UniProtKB-UniRule"/>
</dbReference>
<dbReference type="GO" id="GO:0003700">
    <property type="term" value="F:DNA-binding transcription factor activity"/>
    <property type="evidence" value="ECO:0007669"/>
    <property type="project" value="InterPro"/>
</dbReference>
<dbReference type="GO" id="GO:0005525">
    <property type="term" value="F:GTP binding"/>
    <property type="evidence" value="ECO:0007669"/>
    <property type="project" value="InterPro"/>
</dbReference>
<dbReference type="GO" id="GO:0045892">
    <property type="term" value="P:negative regulation of DNA-templated transcription"/>
    <property type="evidence" value="ECO:0007669"/>
    <property type="project" value="UniProtKB-UniRule"/>
</dbReference>
<dbReference type="FunFam" id="1.10.10.10:FF:000034">
    <property type="entry name" value="GTP-sensing transcriptional pleiotropic repressor CodY"/>
    <property type="match status" value="1"/>
</dbReference>
<dbReference type="FunFam" id="3.30.450.40:FF:000003">
    <property type="entry name" value="GTP-sensing transcriptional pleiotropic repressor CodY"/>
    <property type="match status" value="1"/>
</dbReference>
<dbReference type="Gene3D" id="3.30.450.40">
    <property type="match status" value="1"/>
</dbReference>
<dbReference type="Gene3D" id="1.10.10.10">
    <property type="entry name" value="Winged helix-like DNA-binding domain superfamily/Winged helix DNA-binding domain"/>
    <property type="match status" value="1"/>
</dbReference>
<dbReference type="HAMAP" id="MF_00621">
    <property type="entry name" value="HTH_type_CodY"/>
    <property type="match status" value="1"/>
</dbReference>
<dbReference type="InterPro" id="IPR014154">
    <property type="entry name" value="CodY"/>
</dbReference>
<dbReference type="InterPro" id="IPR029016">
    <property type="entry name" value="GAF-like_dom_sf"/>
</dbReference>
<dbReference type="InterPro" id="IPR013198">
    <property type="entry name" value="GTP_trans_reg_CodY_C"/>
</dbReference>
<dbReference type="InterPro" id="IPR010312">
    <property type="entry name" value="Transc_reg_CodY_N"/>
</dbReference>
<dbReference type="InterPro" id="IPR036388">
    <property type="entry name" value="WH-like_DNA-bd_sf"/>
</dbReference>
<dbReference type="InterPro" id="IPR036390">
    <property type="entry name" value="WH_DNA-bd_sf"/>
</dbReference>
<dbReference type="NCBIfam" id="TIGR02787">
    <property type="entry name" value="codY_Gpos"/>
    <property type="match status" value="1"/>
</dbReference>
<dbReference type="NCBIfam" id="NF003170">
    <property type="entry name" value="PRK04158.1"/>
    <property type="match status" value="1"/>
</dbReference>
<dbReference type="PANTHER" id="PTHR40062:SF1">
    <property type="entry name" value="GLOBAL TRANSCRIPTIONAL REGULATOR CODY"/>
    <property type="match status" value="1"/>
</dbReference>
<dbReference type="PANTHER" id="PTHR40062">
    <property type="entry name" value="GTP-SENSING TRANSCRIPTIONAL PLEIOTROPIC REPRESSOR CODY"/>
    <property type="match status" value="1"/>
</dbReference>
<dbReference type="Pfam" id="PF06018">
    <property type="entry name" value="CodY"/>
    <property type="match status" value="1"/>
</dbReference>
<dbReference type="Pfam" id="PF08222">
    <property type="entry name" value="HTH_CodY"/>
    <property type="match status" value="1"/>
</dbReference>
<dbReference type="PIRSF" id="PIRSF011572">
    <property type="entry name" value="GTP_sensing_CodY"/>
    <property type="match status" value="1"/>
</dbReference>
<dbReference type="SUPFAM" id="SSF55781">
    <property type="entry name" value="GAF domain-like"/>
    <property type="match status" value="1"/>
</dbReference>
<dbReference type="SUPFAM" id="SSF46785">
    <property type="entry name" value="Winged helix' DNA-binding domain"/>
    <property type="match status" value="1"/>
</dbReference>
<name>CODY_CLOBK</name>